<sequence length="137" mass="15883">MMVSICEQKLQHFSAVFLLILCLGMMSAAPPPDPSLDNEWKEWKTKFAKAYNLNEERHRRLVWEENKKKIEAHNADYEQGKTSFYMGLNQFSDLTPEEFKTNCYGNSLNRGEMAPDLPEYEDLGKNSYLTPGRAQPE</sequence>
<gene>
    <name type="primary">Ctla2a</name>
</gene>
<keyword id="KW-1185">Reference proteome</keyword>
<keyword id="KW-0677">Repeat</keyword>
<keyword id="KW-0964">Secreted</keyword>
<keyword id="KW-0732">Signal</keyword>
<accession>P12399</accession>
<accession>Q91V07</accession>
<protein>
    <recommendedName>
        <fullName>Protein CTLA-2-alpha</fullName>
    </recommendedName>
    <alternativeName>
        <fullName>Cytotoxic T-lymphocyte-associated protein 2-alpha</fullName>
    </alternativeName>
</protein>
<evidence type="ECO:0000255" key="1"/>
<evidence type="ECO:0000256" key="2">
    <source>
        <dbReference type="SAM" id="MobiDB-lite"/>
    </source>
</evidence>
<evidence type="ECO:0000305" key="3"/>
<comment type="function">
    <text>Not known, expressed in activated T-cell.</text>
</comment>
<comment type="subcellular location">
    <subcellularLocation>
        <location evidence="3">Secreted</location>
    </subcellularLocation>
</comment>
<comment type="similarity">
    <text evidence="3">To the propeptide regions of cysteine proteases.</text>
</comment>
<comment type="sequence caution" evidence="3">
    <conflict type="erroneous initiation">
        <sequence resource="EMBL-CDS" id="CAA33614"/>
    </conflict>
</comment>
<feature type="signal peptide" evidence="1">
    <location>
        <begin position="1"/>
        <end position="27"/>
    </location>
</feature>
<feature type="chain" id="PRO_0000026485" description="Protein CTLA-2-alpha">
    <location>
        <begin position="28"/>
        <end position="137"/>
    </location>
</feature>
<feature type="repeat" description="1">
    <location>
        <begin position="39"/>
        <end position="41"/>
    </location>
</feature>
<feature type="repeat" description="2">
    <location>
        <begin position="42"/>
        <end position="44"/>
    </location>
</feature>
<feature type="region of interest" description="2 X 3 AA tandem repeats of E-W-K">
    <location>
        <begin position="39"/>
        <end position="44"/>
    </location>
</feature>
<feature type="region of interest" description="Disordered" evidence="2">
    <location>
        <begin position="114"/>
        <end position="137"/>
    </location>
</feature>
<proteinExistence type="evidence at transcript level"/>
<dbReference type="EMBL" id="X15591">
    <property type="protein sequence ID" value="CAA33614.1"/>
    <property type="status" value="ALT_INIT"/>
    <property type="molecule type" value="mRNA"/>
</dbReference>
<dbReference type="EMBL" id="AY034577">
    <property type="protein sequence ID" value="AAK58453.1"/>
    <property type="molecule type" value="mRNA"/>
</dbReference>
<dbReference type="EMBL" id="AY034580">
    <property type="protein sequence ID" value="AAK58456.1"/>
    <property type="molecule type" value="Genomic_DNA"/>
</dbReference>
<dbReference type="EMBL" id="AK005471">
    <property type="protein sequence ID" value="BAB24061.2"/>
    <property type="molecule type" value="mRNA"/>
</dbReference>
<dbReference type="EMBL" id="AK167433">
    <property type="protein sequence ID" value="BAE39520.1"/>
    <property type="molecule type" value="mRNA"/>
</dbReference>
<dbReference type="EMBL" id="AK167664">
    <property type="protein sequence ID" value="BAE39714.1"/>
    <property type="molecule type" value="mRNA"/>
</dbReference>
<dbReference type="EMBL" id="BC028437">
    <property type="protein sequence ID" value="AAH28437.1"/>
    <property type="molecule type" value="mRNA"/>
</dbReference>
<dbReference type="CCDS" id="CCDS49290.1"/>
<dbReference type="PIR" id="S04924">
    <property type="entry name" value="S04924"/>
</dbReference>
<dbReference type="RefSeq" id="NP_031822.2">
    <property type="nucleotide sequence ID" value="NM_007796.2"/>
</dbReference>
<dbReference type="SMR" id="P12399"/>
<dbReference type="FunCoup" id="P12399">
    <property type="interactions" value="7"/>
</dbReference>
<dbReference type="STRING" id="10090.ENSMUSP00000021880"/>
<dbReference type="MEROPS" id="I29.002"/>
<dbReference type="iPTMnet" id="P12399"/>
<dbReference type="PhosphoSitePlus" id="P12399"/>
<dbReference type="CPTAC" id="non-CPTAC-3908"/>
<dbReference type="PaxDb" id="10090-ENSMUSP00000021880"/>
<dbReference type="PeptideAtlas" id="P12399"/>
<dbReference type="ProteomicsDB" id="285395"/>
<dbReference type="Pumba" id="P12399"/>
<dbReference type="DNASU" id="13024"/>
<dbReference type="Ensembl" id="ENSMUST00000021880.10">
    <property type="protein sequence ID" value="ENSMUSP00000021880.10"/>
    <property type="gene ID" value="ENSMUSG00000044258.11"/>
</dbReference>
<dbReference type="GeneID" id="13024"/>
<dbReference type="KEGG" id="mmu:13024"/>
<dbReference type="UCSC" id="uc007qvx.2">
    <property type="organism name" value="mouse"/>
</dbReference>
<dbReference type="AGR" id="MGI:88554"/>
<dbReference type="CTD" id="13024"/>
<dbReference type="MGI" id="MGI:88554">
    <property type="gene designation" value="Ctla2a"/>
</dbReference>
<dbReference type="VEuPathDB" id="HostDB:ENSMUSG00000044258"/>
<dbReference type="eggNOG" id="KOG1543">
    <property type="taxonomic scope" value="Eukaryota"/>
</dbReference>
<dbReference type="GeneTree" id="ENSGT00940000153321"/>
<dbReference type="HOGENOM" id="CLU_2145035_0_0_1"/>
<dbReference type="InParanoid" id="P12399"/>
<dbReference type="OrthoDB" id="5855924at2759"/>
<dbReference type="PhylomeDB" id="P12399"/>
<dbReference type="TreeFam" id="TF343918"/>
<dbReference type="BioGRID-ORCS" id="13024">
    <property type="hits" value="1 hit in 44 CRISPR screens"/>
</dbReference>
<dbReference type="ChiTaRS" id="Ctla2a">
    <property type="organism name" value="mouse"/>
</dbReference>
<dbReference type="PRO" id="PR:P12399"/>
<dbReference type="Proteomes" id="UP000000589">
    <property type="component" value="Chromosome 13"/>
</dbReference>
<dbReference type="RNAct" id="P12399">
    <property type="molecule type" value="protein"/>
</dbReference>
<dbReference type="Bgee" id="ENSMUSG00000044258">
    <property type="expression patterns" value="Expressed in decidua and 235 other cell types or tissues"/>
</dbReference>
<dbReference type="ExpressionAtlas" id="P12399">
    <property type="expression patterns" value="baseline and differential"/>
</dbReference>
<dbReference type="GO" id="GO:0030425">
    <property type="term" value="C:dendrite"/>
    <property type="evidence" value="ECO:0000314"/>
    <property type="project" value="MGI"/>
</dbReference>
<dbReference type="GO" id="GO:0005576">
    <property type="term" value="C:extracellular region"/>
    <property type="evidence" value="ECO:0007669"/>
    <property type="project" value="UniProtKB-SubCell"/>
</dbReference>
<dbReference type="GO" id="GO:0050728">
    <property type="term" value="P:negative regulation of inflammatory response"/>
    <property type="evidence" value="ECO:0000314"/>
    <property type="project" value="MGI"/>
</dbReference>
<dbReference type="GO" id="GO:0010955">
    <property type="term" value="P:negative regulation of protein processing"/>
    <property type="evidence" value="ECO:0000315"/>
    <property type="project" value="MGI"/>
</dbReference>
<dbReference type="GO" id="GO:0045589">
    <property type="term" value="P:regulation of regulatory T cell differentiation"/>
    <property type="evidence" value="ECO:0000315"/>
    <property type="project" value="MGI"/>
</dbReference>
<dbReference type="FunFam" id="1.10.287.2250:FF:000003">
    <property type="entry name" value="Cathepsin L"/>
    <property type="match status" value="1"/>
</dbReference>
<dbReference type="Gene3D" id="1.10.287.2250">
    <property type="match status" value="1"/>
</dbReference>
<dbReference type="InterPro" id="IPR038765">
    <property type="entry name" value="Papain-like_cys_pep_sf"/>
</dbReference>
<dbReference type="InterPro" id="IPR013201">
    <property type="entry name" value="Prot_inhib_I29"/>
</dbReference>
<dbReference type="Pfam" id="PF08246">
    <property type="entry name" value="Inhibitor_I29"/>
    <property type="match status" value="1"/>
</dbReference>
<dbReference type="SMART" id="SM00848">
    <property type="entry name" value="Inhibitor_I29"/>
    <property type="match status" value="1"/>
</dbReference>
<dbReference type="SUPFAM" id="SSF54001">
    <property type="entry name" value="Cysteine proteinases"/>
    <property type="match status" value="1"/>
</dbReference>
<organism>
    <name type="scientific">Mus musculus</name>
    <name type="common">Mouse</name>
    <dbReference type="NCBI Taxonomy" id="10090"/>
    <lineage>
        <taxon>Eukaryota</taxon>
        <taxon>Metazoa</taxon>
        <taxon>Chordata</taxon>
        <taxon>Craniata</taxon>
        <taxon>Vertebrata</taxon>
        <taxon>Euteleostomi</taxon>
        <taxon>Mammalia</taxon>
        <taxon>Eutheria</taxon>
        <taxon>Euarchontoglires</taxon>
        <taxon>Glires</taxon>
        <taxon>Rodentia</taxon>
        <taxon>Myomorpha</taxon>
        <taxon>Muroidea</taxon>
        <taxon>Muridae</taxon>
        <taxon>Murinae</taxon>
        <taxon>Mus</taxon>
        <taxon>Mus</taxon>
    </lineage>
</organism>
<reference key="1">
    <citation type="journal article" date="1989" name="Eur. J. Immunol.">
        <title>Novel structures CTLA-2 alpha and CTLA-2 beta expressed in mouse activated T cells and mast cells and homologous to cysteine proteinase proregions.</title>
        <authorList>
            <person name="Denizot F."/>
            <person name="Brunet J.-F."/>
            <person name="Roustan P."/>
            <person name="Harper K."/>
            <person name="Suzan M."/>
            <person name="Luciani M.-F."/>
            <person name="Mattei M.-G."/>
            <person name="Golstein P."/>
        </authorList>
    </citation>
    <scope>NUCLEOTIDE SEQUENCE [MRNA]</scope>
    <source>
        <strain>C57BL/10-BR</strain>
        <tissue>T-cell</tissue>
    </source>
</reference>
<reference key="2">
    <citation type="journal article" date="2002" name="Genomics">
        <title>Identification and characterization of a dense cluster of placenta-specific cysteine peptidase genes and related genes on mouse chromosome 13.</title>
        <authorList>
            <person name="Deussing J."/>
            <person name="Kouadio M."/>
            <person name="Rehman S."/>
            <person name="Werber I."/>
            <person name="Schwinde A."/>
            <person name="Peters C."/>
        </authorList>
    </citation>
    <scope>NUCLEOTIDE SEQUENCE [GENOMIC RNA / MRNA]</scope>
    <source>
        <strain>129/SvEvTacfBr</strain>
        <strain>C57BL/6J</strain>
        <tissue>Placenta</tissue>
        <tissue>Spleen</tissue>
    </source>
</reference>
<reference key="3">
    <citation type="journal article" date="2005" name="Science">
        <title>The transcriptional landscape of the mammalian genome.</title>
        <authorList>
            <person name="Carninci P."/>
            <person name="Kasukawa T."/>
            <person name="Katayama S."/>
            <person name="Gough J."/>
            <person name="Frith M.C."/>
            <person name="Maeda N."/>
            <person name="Oyama R."/>
            <person name="Ravasi T."/>
            <person name="Lenhard B."/>
            <person name="Wells C."/>
            <person name="Kodzius R."/>
            <person name="Shimokawa K."/>
            <person name="Bajic V.B."/>
            <person name="Brenner S.E."/>
            <person name="Batalov S."/>
            <person name="Forrest A.R."/>
            <person name="Zavolan M."/>
            <person name="Davis M.J."/>
            <person name="Wilming L.G."/>
            <person name="Aidinis V."/>
            <person name="Allen J.E."/>
            <person name="Ambesi-Impiombato A."/>
            <person name="Apweiler R."/>
            <person name="Aturaliya R.N."/>
            <person name="Bailey T.L."/>
            <person name="Bansal M."/>
            <person name="Baxter L."/>
            <person name="Beisel K.W."/>
            <person name="Bersano T."/>
            <person name="Bono H."/>
            <person name="Chalk A.M."/>
            <person name="Chiu K.P."/>
            <person name="Choudhary V."/>
            <person name="Christoffels A."/>
            <person name="Clutterbuck D.R."/>
            <person name="Crowe M.L."/>
            <person name="Dalla E."/>
            <person name="Dalrymple B.P."/>
            <person name="de Bono B."/>
            <person name="Della Gatta G."/>
            <person name="di Bernardo D."/>
            <person name="Down T."/>
            <person name="Engstrom P."/>
            <person name="Fagiolini M."/>
            <person name="Faulkner G."/>
            <person name="Fletcher C.F."/>
            <person name="Fukushima T."/>
            <person name="Furuno M."/>
            <person name="Futaki S."/>
            <person name="Gariboldi M."/>
            <person name="Georgii-Hemming P."/>
            <person name="Gingeras T.R."/>
            <person name="Gojobori T."/>
            <person name="Green R.E."/>
            <person name="Gustincich S."/>
            <person name="Harbers M."/>
            <person name="Hayashi Y."/>
            <person name="Hensch T.K."/>
            <person name="Hirokawa N."/>
            <person name="Hill D."/>
            <person name="Huminiecki L."/>
            <person name="Iacono M."/>
            <person name="Ikeo K."/>
            <person name="Iwama A."/>
            <person name="Ishikawa T."/>
            <person name="Jakt M."/>
            <person name="Kanapin A."/>
            <person name="Katoh M."/>
            <person name="Kawasawa Y."/>
            <person name="Kelso J."/>
            <person name="Kitamura H."/>
            <person name="Kitano H."/>
            <person name="Kollias G."/>
            <person name="Krishnan S.P."/>
            <person name="Kruger A."/>
            <person name="Kummerfeld S.K."/>
            <person name="Kurochkin I.V."/>
            <person name="Lareau L.F."/>
            <person name="Lazarevic D."/>
            <person name="Lipovich L."/>
            <person name="Liu J."/>
            <person name="Liuni S."/>
            <person name="McWilliam S."/>
            <person name="Madan Babu M."/>
            <person name="Madera M."/>
            <person name="Marchionni L."/>
            <person name="Matsuda H."/>
            <person name="Matsuzawa S."/>
            <person name="Miki H."/>
            <person name="Mignone F."/>
            <person name="Miyake S."/>
            <person name="Morris K."/>
            <person name="Mottagui-Tabar S."/>
            <person name="Mulder N."/>
            <person name="Nakano N."/>
            <person name="Nakauchi H."/>
            <person name="Ng P."/>
            <person name="Nilsson R."/>
            <person name="Nishiguchi S."/>
            <person name="Nishikawa S."/>
            <person name="Nori F."/>
            <person name="Ohara O."/>
            <person name="Okazaki Y."/>
            <person name="Orlando V."/>
            <person name="Pang K.C."/>
            <person name="Pavan W.J."/>
            <person name="Pavesi G."/>
            <person name="Pesole G."/>
            <person name="Petrovsky N."/>
            <person name="Piazza S."/>
            <person name="Reed J."/>
            <person name="Reid J.F."/>
            <person name="Ring B.Z."/>
            <person name="Ringwald M."/>
            <person name="Rost B."/>
            <person name="Ruan Y."/>
            <person name="Salzberg S.L."/>
            <person name="Sandelin A."/>
            <person name="Schneider C."/>
            <person name="Schoenbach C."/>
            <person name="Sekiguchi K."/>
            <person name="Semple C.A."/>
            <person name="Seno S."/>
            <person name="Sessa L."/>
            <person name="Sheng Y."/>
            <person name="Shibata Y."/>
            <person name="Shimada H."/>
            <person name="Shimada K."/>
            <person name="Silva D."/>
            <person name="Sinclair B."/>
            <person name="Sperling S."/>
            <person name="Stupka E."/>
            <person name="Sugiura K."/>
            <person name="Sultana R."/>
            <person name="Takenaka Y."/>
            <person name="Taki K."/>
            <person name="Tammoja K."/>
            <person name="Tan S.L."/>
            <person name="Tang S."/>
            <person name="Taylor M.S."/>
            <person name="Tegner J."/>
            <person name="Teichmann S.A."/>
            <person name="Ueda H.R."/>
            <person name="van Nimwegen E."/>
            <person name="Verardo R."/>
            <person name="Wei C.L."/>
            <person name="Yagi K."/>
            <person name="Yamanishi H."/>
            <person name="Zabarovsky E."/>
            <person name="Zhu S."/>
            <person name="Zimmer A."/>
            <person name="Hide W."/>
            <person name="Bult C."/>
            <person name="Grimmond S.M."/>
            <person name="Teasdale R.D."/>
            <person name="Liu E.T."/>
            <person name="Brusic V."/>
            <person name="Quackenbush J."/>
            <person name="Wahlestedt C."/>
            <person name="Mattick J.S."/>
            <person name="Hume D.A."/>
            <person name="Kai C."/>
            <person name="Sasaki D."/>
            <person name="Tomaru Y."/>
            <person name="Fukuda S."/>
            <person name="Kanamori-Katayama M."/>
            <person name="Suzuki M."/>
            <person name="Aoki J."/>
            <person name="Arakawa T."/>
            <person name="Iida J."/>
            <person name="Imamura K."/>
            <person name="Itoh M."/>
            <person name="Kato T."/>
            <person name="Kawaji H."/>
            <person name="Kawagashira N."/>
            <person name="Kawashima T."/>
            <person name="Kojima M."/>
            <person name="Kondo S."/>
            <person name="Konno H."/>
            <person name="Nakano K."/>
            <person name="Ninomiya N."/>
            <person name="Nishio T."/>
            <person name="Okada M."/>
            <person name="Plessy C."/>
            <person name="Shibata K."/>
            <person name="Shiraki T."/>
            <person name="Suzuki S."/>
            <person name="Tagami M."/>
            <person name="Waki K."/>
            <person name="Watahiki A."/>
            <person name="Okamura-Oho Y."/>
            <person name="Suzuki H."/>
            <person name="Kawai J."/>
            <person name="Hayashizaki Y."/>
        </authorList>
    </citation>
    <scope>NUCLEOTIDE SEQUENCE [LARGE SCALE MRNA]</scope>
    <source>
        <strain>C57BL/6J</strain>
        <tissue>Placenta</tissue>
    </source>
</reference>
<reference key="4">
    <citation type="journal article" date="2004" name="Genome Res.">
        <title>The status, quality, and expansion of the NIH full-length cDNA project: the Mammalian Gene Collection (MGC).</title>
        <authorList>
            <consortium name="The MGC Project Team"/>
        </authorList>
    </citation>
    <scope>NUCLEOTIDE SEQUENCE [LARGE SCALE MRNA]</scope>
    <source>
        <strain>C57BL/6J</strain>
        <tissue>Mammary gland</tissue>
    </source>
</reference>
<name>CTL2A_MOUSE</name>